<comment type="function">
    <text evidence="1 4 5 6 7 9 10 11 12">Proton-sensing G-protein coupled receptor activated by extracellular pH, which is required to monitor pH changes and generate adaptive reactions (PubMed:15326175, PubMed:15618224, PubMed:20855608, PubMed:33478938, PubMed:37722051, PubMed:39753132). Activated by an optimal pH of 7.4 (PubMed:39753132). Ligand binding causes a conformation change that triggers signaling via guanine nucleotide-binding proteins (G proteins) and modulates the activity of downstream effectors, such as adenylate cyclase (PubMed:15326175, PubMed:15618224, PubMed:37722051, PubMed:39753132). GPR65 is mainly coupled to G(s) G proteins and mediates activation of adenylate cyclase activity (PubMed:15618224, PubMed:37722051, PubMed:39753132). May also act as a receptor for the glycosphingolipid psychosine (PSY) and several related glycosphingolipids (PubMed:11309421, PubMed:15326175). Plays a role in immune response by maintaining lysosome function and regulating T-cell metabolism (PubMed:27287411). Acts as a regulator of inflammation by mediating pH-sensing of extracellular acidification which takes place in inflamed tissues: activation regulates endo-lysosomal function of immune cells and T-cell metabolism (By similarity). Constitutively active in endosomes and stimulates adenylate cyclase production from endosomes independently from extracellular pH changes (PubMed:39753132).</text>
</comment>
<comment type="activity regulation">
    <text evidence="8 12">Activated by a network of residues that connects an extracellular-facing cavity to Glu-142, a conserved charged residue buried in the transmembrane core of the receptor (PubMed:39753132). Protonation likely drives conformational changes in extracellular loop 2 (ECL2), which stabilizes movement of transmembrane 3 (TM3) and a series of rearrangements that connect the extracellular-facing cavity to Glu-142, a residue only conserved in proton-sensing G-protein coupled receptors (PubMed:39753132). Activated by BTB09089, a positive allosteric modulator (PubMed:26550826).</text>
</comment>
<comment type="subcellular location">
    <subcellularLocation>
        <location evidence="6 11">Cell membrane</location>
        <topology evidence="12">Multi-pass membrane protein</topology>
    </subcellularLocation>
    <subcellularLocation>
        <location evidence="11">Early endosome membrane</location>
        <topology evidence="12">Multi-pass membrane protein</topology>
    </subcellularLocation>
    <subcellularLocation>
        <location evidence="11">Late endosome membrane</location>
        <topology evidence="12">Multi-pass membrane protein</topology>
    </subcellularLocation>
    <text evidence="12">Internalizes and localizes to early and late endosomes, from where GPR65 signals at steady state, irrespective of extracellular pH (PubMed:39753132). Changes in extracellular pH may relocalize receptor signaling to the cell membrane (PubMed:39753132).</text>
</comment>
<comment type="tissue specificity">
    <text evidence="4 13">Predominantly expressed in thymus, spleen, lymph nodes, small intestine, lung, placenta and peripheral blood leukocytes.</text>
</comment>
<comment type="domain">
    <text evidence="10 12">A multitude of proton-sensing residues, which include extracellular histidine (His-10, His-14 and His-243) residues or triad of buried acidic residues (Asp-60, Glu-142, Asp-286), contribute to activation of the G-protein coupled receptor activity and pH sensitivity.</text>
</comment>
<comment type="similarity">
    <text evidence="3">Belongs to the G-protein coupled receptor 1 family.</text>
</comment>
<dbReference type="EMBL" id="U95218">
    <property type="protein sequence ID" value="AAC31794.1"/>
    <property type="molecule type" value="Genomic_DNA"/>
</dbReference>
<dbReference type="EMBL" id="AL157955">
    <property type="status" value="NOT_ANNOTATED_CDS"/>
    <property type="molecule type" value="Genomic_DNA"/>
</dbReference>
<dbReference type="EMBL" id="BC035633">
    <property type="protein sequence ID" value="AAH35633.1"/>
    <property type="molecule type" value="mRNA"/>
</dbReference>
<dbReference type="EMBL" id="BC071715">
    <property type="protein sequence ID" value="AAH71715.1"/>
    <property type="molecule type" value="mRNA"/>
</dbReference>
<dbReference type="CCDS" id="CCDS9879.1"/>
<dbReference type="RefSeq" id="NP_003599.2">
    <property type="nucleotide sequence ID" value="NM_003608.3"/>
</dbReference>
<dbReference type="PDB" id="9BHL">
    <property type="method" value="EM"/>
    <property type="resolution" value="2.80 A"/>
    <property type="chains" value="R=1-337"/>
</dbReference>
<dbReference type="PDBsum" id="9BHL"/>
<dbReference type="EMDB" id="EMD-44549"/>
<dbReference type="SMR" id="Q8IYL9"/>
<dbReference type="BioGRID" id="114052">
    <property type="interactions" value="1"/>
</dbReference>
<dbReference type="FunCoup" id="Q8IYL9">
    <property type="interactions" value="529"/>
</dbReference>
<dbReference type="IntAct" id="Q8IYL9">
    <property type="interactions" value="2"/>
</dbReference>
<dbReference type="STRING" id="9606.ENSP00000267549"/>
<dbReference type="BindingDB" id="Q8IYL9"/>
<dbReference type="ChEMBL" id="CHEMBL3714081"/>
<dbReference type="GlyCosmos" id="Q8IYL9">
    <property type="glycosylation" value="3 sites, No reported glycans"/>
</dbReference>
<dbReference type="GlyGen" id="Q8IYL9">
    <property type="glycosylation" value="4 sites, 1 O-linked glycan (1 site)"/>
</dbReference>
<dbReference type="iPTMnet" id="Q8IYL9"/>
<dbReference type="PhosphoSitePlus" id="Q8IYL9"/>
<dbReference type="BioMuta" id="GPR65"/>
<dbReference type="DMDM" id="37537957"/>
<dbReference type="MassIVE" id="Q8IYL9"/>
<dbReference type="PaxDb" id="9606-ENSP00000267549"/>
<dbReference type="PeptideAtlas" id="Q8IYL9"/>
<dbReference type="ProteomicsDB" id="71200"/>
<dbReference type="Antibodypedia" id="13320">
    <property type="antibodies" value="212 antibodies from 30 providers"/>
</dbReference>
<dbReference type="DNASU" id="8477"/>
<dbReference type="Ensembl" id="ENST00000267549.5">
    <property type="protein sequence ID" value="ENSP00000267549.3"/>
    <property type="gene ID" value="ENSG00000140030.6"/>
</dbReference>
<dbReference type="GeneID" id="8477"/>
<dbReference type="KEGG" id="hsa:8477"/>
<dbReference type="MANE-Select" id="ENST00000267549.5">
    <property type="protein sequence ID" value="ENSP00000267549.3"/>
    <property type="RefSeq nucleotide sequence ID" value="NM_003608.4"/>
    <property type="RefSeq protein sequence ID" value="NP_003599.2"/>
</dbReference>
<dbReference type="UCSC" id="uc001xvv.3">
    <property type="organism name" value="human"/>
</dbReference>
<dbReference type="AGR" id="HGNC:4517"/>
<dbReference type="CTD" id="8477"/>
<dbReference type="DisGeNET" id="8477"/>
<dbReference type="GeneCards" id="GPR65"/>
<dbReference type="HGNC" id="HGNC:4517">
    <property type="gene designation" value="GPR65"/>
</dbReference>
<dbReference type="HPA" id="ENSG00000140030">
    <property type="expression patterns" value="Tissue enhanced (bone marrow, lymphoid tissue)"/>
</dbReference>
<dbReference type="MIM" id="604620">
    <property type="type" value="gene"/>
</dbReference>
<dbReference type="neXtProt" id="NX_Q8IYL9"/>
<dbReference type="OpenTargets" id="ENSG00000140030"/>
<dbReference type="PharmGKB" id="PA28909"/>
<dbReference type="VEuPathDB" id="HostDB:ENSG00000140030"/>
<dbReference type="eggNOG" id="KOG3656">
    <property type="taxonomic scope" value="Eukaryota"/>
</dbReference>
<dbReference type="GeneTree" id="ENSGT01130000278337"/>
<dbReference type="HOGENOM" id="CLU_009579_8_2_1"/>
<dbReference type="InParanoid" id="Q8IYL9"/>
<dbReference type="OMA" id="ICNQKVY"/>
<dbReference type="OrthoDB" id="6021389at2759"/>
<dbReference type="PAN-GO" id="Q8IYL9">
    <property type="GO annotations" value="4 GO annotations based on evolutionary models"/>
</dbReference>
<dbReference type="PhylomeDB" id="Q8IYL9"/>
<dbReference type="TreeFam" id="TF331803"/>
<dbReference type="PathwayCommons" id="Q8IYL9"/>
<dbReference type="Reactome" id="R-HSA-373076">
    <property type="pathway name" value="Class A/1 (Rhodopsin-like receptors)"/>
</dbReference>
<dbReference type="Reactome" id="R-HSA-416476">
    <property type="pathway name" value="G alpha (q) signalling events"/>
</dbReference>
<dbReference type="SignaLink" id="Q8IYL9"/>
<dbReference type="SIGNOR" id="Q8IYL9"/>
<dbReference type="BioGRID-ORCS" id="8477">
    <property type="hits" value="12 hits in 1155 CRISPR screens"/>
</dbReference>
<dbReference type="GeneWiki" id="GPR65"/>
<dbReference type="GenomeRNAi" id="8477"/>
<dbReference type="Pharos" id="Q8IYL9">
    <property type="development level" value="Tbio"/>
</dbReference>
<dbReference type="PRO" id="PR:Q8IYL9"/>
<dbReference type="Proteomes" id="UP000005640">
    <property type="component" value="Chromosome 14"/>
</dbReference>
<dbReference type="RNAct" id="Q8IYL9">
    <property type="molecule type" value="protein"/>
</dbReference>
<dbReference type="Bgee" id="ENSG00000140030">
    <property type="expression patterns" value="Expressed in leukocyte and 113 other cell types or tissues"/>
</dbReference>
<dbReference type="ExpressionAtlas" id="Q8IYL9">
    <property type="expression patterns" value="baseline and differential"/>
</dbReference>
<dbReference type="GO" id="GO:0005886">
    <property type="term" value="C:plasma membrane"/>
    <property type="evidence" value="ECO:0000314"/>
    <property type="project" value="BHF-UCL"/>
</dbReference>
<dbReference type="GO" id="GO:0004930">
    <property type="term" value="F:G protein-coupled receptor activity"/>
    <property type="evidence" value="ECO:0000314"/>
    <property type="project" value="BHF-UCL"/>
</dbReference>
<dbReference type="GO" id="GO:0007189">
    <property type="term" value="P:adenylate cyclase-activating G protein-coupled receptor signaling pathway"/>
    <property type="evidence" value="ECO:0000314"/>
    <property type="project" value="BHF-UCL"/>
</dbReference>
<dbReference type="GO" id="GO:0006915">
    <property type="term" value="P:apoptotic process"/>
    <property type="evidence" value="ECO:0007669"/>
    <property type="project" value="UniProtKB-KW"/>
</dbReference>
<dbReference type="GO" id="GO:0007186">
    <property type="term" value="P:G protein-coupled receptor signaling pathway"/>
    <property type="evidence" value="ECO:0000314"/>
    <property type="project" value="BHF-UCL"/>
</dbReference>
<dbReference type="GO" id="GO:0006955">
    <property type="term" value="P:immune response"/>
    <property type="evidence" value="ECO:0000304"/>
    <property type="project" value="ProtInc"/>
</dbReference>
<dbReference type="GO" id="GO:0051496">
    <property type="term" value="P:positive regulation of stress fiber assembly"/>
    <property type="evidence" value="ECO:0000314"/>
    <property type="project" value="BHF-UCL"/>
</dbReference>
<dbReference type="GO" id="GO:0010447">
    <property type="term" value="P:response to acidic pH"/>
    <property type="evidence" value="ECO:0000314"/>
    <property type="project" value="BHF-UCL"/>
</dbReference>
<dbReference type="CDD" id="cd15365">
    <property type="entry name" value="7tmA_GPR65_TDAG8"/>
    <property type="match status" value="1"/>
</dbReference>
<dbReference type="FunFam" id="1.20.1070.10:FF:000239">
    <property type="entry name" value="G-protein-coupled receptor 65"/>
    <property type="match status" value="1"/>
</dbReference>
<dbReference type="Gene3D" id="1.20.1070.10">
    <property type="entry name" value="Rhodopsin 7-helix transmembrane proteins"/>
    <property type="match status" value="1"/>
</dbReference>
<dbReference type="InterPro" id="IPR000276">
    <property type="entry name" value="GPCR_Rhodpsn"/>
</dbReference>
<dbReference type="InterPro" id="IPR017452">
    <property type="entry name" value="GPCR_Rhodpsn_7TM"/>
</dbReference>
<dbReference type="InterPro" id="IPR005464">
    <property type="entry name" value="Psych_rcpt"/>
</dbReference>
<dbReference type="PANTHER" id="PTHR24234:SF15">
    <property type="entry name" value="G PROTEIN-COUPLED RECEPTOR 65"/>
    <property type="match status" value="1"/>
</dbReference>
<dbReference type="PANTHER" id="PTHR24234">
    <property type="entry name" value="LYSOPHOSPHATIDIC ACID RECEPTOR 5/SPHINGOSYLPHOSPHORYLCHOLINE RECEPTOR"/>
    <property type="match status" value="1"/>
</dbReference>
<dbReference type="Pfam" id="PF00001">
    <property type="entry name" value="7tm_1"/>
    <property type="match status" value="1"/>
</dbReference>
<dbReference type="PRINTS" id="PR00237">
    <property type="entry name" value="GPCRRHODOPSN"/>
</dbReference>
<dbReference type="PRINTS" id="PR01649">
    <property type="entry name" value="PSYCHOSINER"/>
</dbReference>
<dbReference type="SUPFAM" id="SSF81321">
    <property type="entry name" value="Family A G protein-coupled receptor-like"/>
    <property type="match status" value="1"/>
</dbReference>
<dbReference type="PROSITE" id="PS00237">
    <property type="entry name" value="G_PROTEIN_RECEP_F1_1"/>
    <property type="match status" value="1"/>
</dbReference>
<dbReference type="PROSITE" id="PS50262">
    <property type="entry name" value="G_PROTEIN_RECEP_F1_2"/>
    <property type="match status" value="1"/>
</dbReference>
<evidence type="ECO:0000250" key="1">
    <source>
        <dbReference type="UniProtKB" id="Q61038"/>
    </source>
</evidence>
<evidence type="ECO:0000255" key="2"/>
<evidence type="ECO:0000255" key="3">
    <source>
        <dbReference type="PROSITE-ProRule" id="PRU00521"/>
    </source>
</evidence>
<evidence type="ECO:0000269" key="4">
    <source>
    </source>
</evidence>
<evidence type="ECO:0000269" key="5">
    <source>
    </source>
</evidence>
<evidence type="ECO:0000269" key="6">
    <source>
    </source>
</evidence>
<evidence type="ECO:0000269" key="7">
    <source>
    </source>
</evidence>
<evidence type="ECO:0000269" key="8">
    <source>
    </source>
</evidence>
<evidence type="ECO:0000269" key="9">
    <source>
    </source>
</evidence>
<evidence type="ECO:0000269" key="10">
    <source>
    </source>
</evidence>
<evidence type="ECO:0000269" key="11">
    <source>
    </source>
</evidence>
<evidence type="ECO:0000269" key="12">
    <source>
    </source>
</evidence>
<evidence type="ECO:0000269" key="13">
    <source>
    </source>
</evidence>
<evidence type="ECO:0000303" key="14">
    <source>
    </source>
</evidence>
<evidence type="ECO:0000303" key="15">
    <source>
    </source>
</evidence>
<evidence type="ECO:0000303" key="16">
    <source>
    </source>
</evidence>
<evidence type="ECO:0000305" key="17"/>
<evidence type="ECO:0000305" key="18">
    <source>
    </source>
</evidence>
<evidence type="ECO:0000312" key="19">
    <source>
        <dbReference type="HGNC" id="HGNC:4517"/>
    </source>
</evidence>
<evidence type="ECO:0007744" key="20">
    <source>
        <dbReference type="PDB" id="9BHL"/>
    </source>
</evidence>
<feature type="chain" id="PRO_0000070087" description="G-protein coupled receptor 65">
    <location>
        <begin position="1"/>
        <end position="337"/>
    </location>
</feature>
<feature type="topological domain" description="Extracellular" evidence="12 20">
    <location>
        <begin position="1"/>
        <end position="5"/>
    </location>
</feature>
<feature type="transmembrane region" description="Helical; Name=1" evidence="12 20">
    <location>
        <begin position="6"/>
        <end position="42"/>
    </location>
</feature>
<feature type="topological domain" description="Cytoplasmic" evidence="12 20">
    <location>
        <begin position="43"/>
        <end position="46"/>
    </location>
</feature>
<feature type="transmembrane region" description="Helical; Name=2" evidence="12 20">
    <location>
        <begin position="47"/>
        <end position="77"/>
    </location>
</feature>
<feature type="topological domain" description="Extracellular" evidence="12 20">
    <location>
        <begin position="78"/>
        <end position="82"/>
    </location>
</feature>
<feature type="transmembrane region" description="Helical; Name=3" evidence="12 20">
    <location>
        <begin position="83"/>
        <end position="118"/>
    </location>
</feature>
<feature type="topological domain" description="Cytoplasmic" evidence="12 20">
    <location>
        <begin position="119"/>
        <end position="126"/>
    </location>
</feature>
<feature type="transmembrane region" description="Helical; Name=4" evidence="12 20">
    <location>
        <begin position="127"/>
        <end position="153"/>
    </location>
</feature>
<feature type="topological domain" description="Extracellular" evidence="12 20">
    <location>
        <begin position="154"/>
        <end position="174"/>
    </location>
</feature>
<feature type="transmembrane region" description="Helical; Name=5" evidence="12 20">
    <location>
        <begin position="175"/>
        <end position="212"/>
    </location>
</feature>
<feature type="topological domain" description="Cytoplasmic" evidence="12 20">
    <location>
        <begin position="213"/>
        <end position="216"/>
    </location>
</feature>
<feature type="transmembrane region" description="Helical; Name=6" evidence="12 20">
    <location>
        <begin position="217"/>
        <end position="252"/>
    </location>
</feature>
<feature type="topological domain" description="Extracellular" evidence="12 20">
    <location>
        <begin position="253"/>
        <end position="264"/>
    </location>
</feature>
<feature type="transmembrane region" description="Helical; Name=7" evidence="12 20">
    <location>
        <begin position="265"/>
        <end position="293"/>
    </location>
</feature>
<feature type="topological domain" description="Cytoplasmic" evidence="12 20">
    <location>
        <begin position="294"/>
        <end position="337"/>
    </location>
</feature>
<feature type="region of interest" description="Extracellular loop 2 (ECL2)" evidence="12">
    <location>
        <begin position="154"/>
        <end position="174"/>
    </location>
</feature>
<feature type="site" description="Proton sensing" evidence="18">
    <location>
        <position position="10"/>
    </location>
</feature>
<feature type="site" description="Proton sensing" evidence="18">
    <location>
        <position position="14"/>
    </location>
</feature>
<feature type="site" description="Required for activation" evidence="12">
    <location>
        <position position="142"/>
    </location>
</feature>
<feature type="site" description="Proton sensing" evidence="18">
    <location>
        <position position="243"/>
    </location>
</feature>
<feature type="glycosylation site" description="N-linked (GlcNAc...) asparagine" evidence="2">
    <location>
        <position position="2"/>
    </location>
</feature>
<feature type="glycosylation site" description="N-linked (GlcNAc...) asparagine" evidence="2">
    <location>
        <position position="79"/>
    </location>
</feature>
<feature type="glycosylation site" description="N-linked (GlcNAc...) asparagine" evidence="2">
    <location>
        <position position="166"/>
    </location>
</feature>
<feature type="disulfide bond" evidence="12 20">
    <location>
        <begin position="5"/>
        <end position="160"/>
    </location>
</feature>
<feature type="disulfide bond" evidence="3 12 20">
    <location>
        <begin position="87"/>
        <end position="170"/>
    </location>
</feature>
<feature type="sequence variant" id="VAR_022064" description="Increased lysosomal pH; increased lipid droplets accumulation; dbSNP:rs3742704.">
    <original>I</original>
    <variation>L</variation>
    <location>
        <position position="231"/>
    </location>
</feature>
<feature type="mutagenesis site" description="Decreased proton-induced G-protein coupled receptor signaling; when associated with F-14 and F-243." evidence="11">
    <original>H</original>
    <variation>F</variation>
    <location>
        <position position="10"/>
    </location>
</feature>
<feature type="mutagenesis site" description="Decreased proton-induced G-protein coupled receptor signaling; when associated with F-10 and F-243." evidence="11">
    <original>H</original>
    <variation>F</variation>
    <location>
        <position position="14"/>
    </location>
</feature>
<feature type="mutagenesis site" description="Impaired ability to sense protons." evidence="10">
    <original>D</original>
    <variation>N</variation>
    <location>
        <position position="60"/>
    </location>
</feature>
<feature type="mutagenesis site" description="Mimics the protonation state; induces a shift of the optimal pH for activation." evidence="10 12">
    <original>E</original>
    <variation>Q</variation>
    <location>
        <position position="142"/>
    </location>
</feature>
<feature type="mutagenesis site" description="Decreased proton-induced G-protein coupled receptor signaling." evidence="12">
    <original>D</original>
    <variation>A</variation>
    <location>
        <position position="172"/>
    </location>
</feature>
<feature type="mutagenesis site" description="Decreased proton-induced G-protein coupled receptor signaling; when associated with F-10 and F-14." evidence="11">
    <original>H</original>
    <variation>F</variation>
    <location>
        <position position="243"/>
    </location>
</feature>
<feature type="mutagenesis site" description="Decreased proton-induced G-protein coupled receptor signaling." evidence="12">
    <original>R</original>
    <variation>A</variation>
    <location>
        <position position="273"/>
    </location>
</feature>
<feature type="mutagenesis site" description="Impaired ability to sense protons." evidence="10">
    <original>D</original>
    <variation>N</variation>
    <location>
        <position position="286"/>
    </location>
</feature>
<feature type="sequence conflict" description="In Ref. 1; AAC31794." evidence="17" ref="1">
    <original>A</original>
    <variation>P</variation>
    <location>
        <position position="43"/>
    </location>
</feature>
<feature type="sequence conflict" description="In Ref. 1; AAC31794." evidence="17" ref="1">
    <original>N</original>
    <variation>K</variation>
    <location>
        <position position="97"/>
    </location>
</feature>
<feature type="sequence conflict" description="In Ref. 1; AAC31794." evidence="17" ref="1">
    <original>F</original>
    <variation>I</variation>
    <location>
        <position position="130"/>
    </location>
</feature>
<gene>
    <name evidence="15 19" type="primary">GPR65</name>
    <name evidence="16" type="synonym">TDAG8</name>
</gene>
<reference key="1">
    <citation type="journal article" date="1998" name="DNA Cell Biol.">
        <title>Cloning, characterization, and mapping of human homolog of mouse T-cell death-associated gene.</title>
        <authorList>
            <person name="Kyaw H."/>
            <person name="Zeng Z."/>
            <person name="Su K."/>
            <person name="Fan P."/>
            <person name="Shell B.K."/>
            <person name="Carter K.C."/>
            <person name="Li Y."/>
        </authorList>
    </citation>
    <scope>NUCLEOTIDE SEQUENCE [GENOMIC DNA]</scope>
    <scope>TISSUE SPECIFICITY</scope>
</reference>
<reference key="2">
    <citation type="journal article" date="2003" name="Nature">
        <title>The DNA sequence and analysis of human chromosome 14.</title>
        <authorList>
            <person name="Heilig R."/>
            <person name="Eckenberg R."/>
            <person name="Petit J.-L."/>
            <person name="Fonknechten N."/>
            <person name="Da Silva C."/>
            <person name="Cattolico L."/>
            <person name="Levy M."/>
            <person name="Barbe V."/>
            <person name="De Berardinis V."/>
            <person name="Ureta-Vidal A."/>
            <person name="Pelletier E."/>
            <person name="Vico V."/>
            <person name="Anthouard V."/>
            <person name="Rowen L."/>
            <person name="Madan A."/>
            <person name="Qin S."/>
            <person name="Sun H."/>
            <person name="Du H."/>
            <person name="Pepin K."/>
            <person name="Artiguenave F."/>
            <person name="Robert C."/>
            <person name="Cruaud C."/>
            <person name="Bruels T."/>
            <person name="Jaillon O."/>
            <person name="Friedlander L."/>
            <person name="Samson G."/>
            <person name="Brottier P."/>
            <person name="Cure S."/>
            <person name="Segurens B."/>
            <person name="Aniere F."/>
            <person name="Samain S."/>
            <person name="Crespeau H."/>
            <person name="Abbasi N."/>
            <person name="Aiach N."/>
            <person name="Boscus D."/>
            <person name="Dickhoff R."/>
            <person name="Dors M."/>
            <person name="Dubois I."/>
            <person name="Friedman C."/>
            <person name="Gouyvenoux M."/>
            <person name="James R."/>
            <person name="Madan A."/>
            <person name="Mairey-Estrada B."/>
            <person name="Mangenot S."/>
            <person name="Martins N."/>
            <person name="Menard M."/>
            <person name="Oztas S."/>
            <person name="Ratcliffe A."/>
            <person name="Shaffer T."/>
            <person name="Trask B."/>
            <person name="Vacherie B."/>
            <person name="Bellemere C."/>
            <person name="Belser C."/>
            <person name="Besnard-Gonnet M."/>
            <person name="Bartol-Mavel D."/>
            <person name="Boutard M."/>
            <person name="Briez-Silla S."/>
            <person name="Combette S."/>
            <person name="Dufosse-Laurent V."/>
            <person name="Ferron C."/>
            <person name="Lechaplais C."/>
            <person name="Louesse C."/>
            <person name="Muselet D."/>
            <person name="Magdelenat G."/>
            <person name="Pateau E."/>
            <person name="Petit E."/>
            <person name="Sirvain-Trukniewicz P."/>
            <person name="Trybou A."/>
            <person name="Vega-Czarny N."/>
            <person name="Bataille E."/>
            <person name="Bluet E."/>
            <person name="Bordelais I."/>
            <person name="Dubois M."/>
            <person name="Dumont C."/>
            <person name="Guerin T."/>
            <person name="Haffray S."/>
            <person name="Hammadi R."/>
            <person name="Muanga J."/>
            <person name="Pellouin V."/>
            <person name="Robert D."/>
            <person name="Wunderle E."/>
            <person name="Gauguet G."/>
            <person name="Roy A."/>
            <person name="Sainte-Marthe L."/>
            <person name="Verdier J."/>
            <person name="Verdier-Discala C."/>
            <person name="Hillier L.W."/>
            <person name="Fulton L."/>
            <person name="McPherson J."/>
            <person name="Matsuda F."/>
            <person name="Wilson R."/>
            <person name="Scarpelli C."/>
            <person name="Gyapay G."/>
            <person name="Wincker P."/>
            <person name="Saurin W."/>
            <person name="Quetier F."/>
            <person name="Waterston R."/>
            <person name="Hood L."/>
            <person name="Weissenbach J."/>
        </authorList>
    </citation>
    <scope>NUCLEOTIDE SEQUENCE [LARGE SCALE GENOMIC DNA]</scope>
</reference>
<reference key="3">
    <citation type="journal article" date="2004" name="Genome Res.">
        <title>The status, quality, and expansion of the NIH full-length cDNA project: the Mammalian Gene Collection (MGC).</title>
        <authorList>
            <consortium name="The MGC Project Team"/>
        </authorList>
    </citation>
    <scope>NUCLEOTIDE SEQUENCE [LARGE SCALE MRNA]</scope>
    <source>
        <tissue>Blood</tissue>
        <tissue>Brain</tissue>
    </source>
</reference>
<reference key="4">
    <citation type="journal article" date="2001" name="J. Cell Biol.">
        <title>Identification of a molecular target of psychosine and its role in globoid cell formation.</title>
        <authorList>
            <person name="Im D.-S."/>
            <person name="Heise C.E."/>
            <person name="Nguyen T."/>
            <person name="O'Dowd B.F."/>
            <person name="Lynch K.R."/>
        </authorList>
    </citation>
    <scope>FUNCTION</scope>
    <scope>TISSUE SPECIFICITY</scope>
</reference>
<reference key="5">
    <citation type="journal article" date="2004" name="J. Biol. Chem.">
        <title>TDAG8 is a proton-sensing and psychosine-sensitive G-protein-coupled receptor.</title>
        <authorList>
            <person name="Wang J.Q."/>
            <person name="Kon J."/>
            <person name="Mogi C."/>
            <person name="Tobo M."/>
            <person name="Damirin A."/>
            <person name="Sato K."/>
            <person name="Komachi M."/>
            <person name="Malchinkhuu E."/>
            <person name="Murata N."/>
            <person name="Kimura T."/>
            <person name="Kuwabara A."/>
            <person name="Wakamatsu K."/>
            <person name="Koizumi H."/>
            <person name="Uede T."/>
            <person name="Tsujimoto G."/>
            <person name="Kurose H."/>
            <person name="Sato T."/>
            <person name="Harada A."/>
            <person name="Misawa N."/>
            <person name="Tomura H."/>
            <person name="Okajima F."/>
        </authorList>
    </citation>
    <scope>FUNCTION</scope>
</reference>
<reference key="6">
    <citation type="journal article" date="2005" name="J. Biol. Chem.">
        <title>Identification of T cell death-associated gene 8 (TDAG8) as a novel acid sensing G-protein-coupled receptor.</title>
        <authorList>
            <person name="Ishii S."/>
            <person name="Kihara Y."/>
            <person name="Shimizu T."/>
        </authorList>
    </citation>
    <scope>FUNCTION</scope>
    <scope>SUBCELLULAR LOCATION</scope>
</reference>
<reference key="7">
    <citation type="journal article" date="2010" name="Proc. Natl. Acad. Sci. U.S.A.">
        <title>The G protein-coupled receptor T-cell death-associated gene 8 (TDAG8) facilitates tumor development by serving as an extracellular pH sensor.</title>
        <authorList>
            <person name="Ihara Y."/>
            <person name="Kihara Y."/>
            <person name="Hamano F."/>
            <person name="Yanagida K."/>
            <person name="Morishita Y."/>
            <person name="Kunita A."/>
            <person name="Yamori T."/>
            <person name="Fukayama M."/>
            <person name="Aburatani H."/>
            <person name="Shimizu T."/>
            <person name="Ishii S."/>
        </authorList>
    </citation>
    <scope>FUNCTION</scope>
</reference>
<reference key="8">
    <citation type="journal article" date="2015" name="Nature">
        <title>Allosteric ligands for the pharmacologically dark receptors GPR68 and GPR65.</title>
        <authorList>
            <person name="Huang X.P."/>
            <person name="Karpiak J."/>
            <person name="Kroeze W.K."/>
            <person name="Zhu H."/>
            <person name="Chen X."/>
            <person name="Moy S.S."/>
            <person name="Saddoris K.A."/>
            <person name="Nikolova V.D."/>
            <person name="Farrell M.S."/>
            <person name="Wang S."/>
            <person name="Mangano T.J."/>
            <person name="Deshpande D.A."/>
            <person name="Jiang A."/>
            <person name="Penn R.B."/>
            <person name="Jin J."/>
            <person name="Koller B.H."/>
            <person name="Kenakin T."/>
            <person name="Shoichet B.K."/>
            <person name="Roth B.L."/>
        </authorList>
    </citation>
    <scope>ACTIVITY REGULATION</scope>
</reference>
<reference key="9">
    <citation type="journal article" date="2016" name="Immunity">
        <title>Genetic coding variant in GPR65 alters lysosomal pH and links lysosomal dysfunction with colitis risk.</title>
        <authorList>
            <person name="Lassen K.G."/>
            <person name="McKenzie C.I."/>
            <person name="Mari M."/>
            <person name="Murano T."/>
            <person name="Begun J."/>
            <person name="Baxt L.A."/>
            <person name="Goel G."/>
            <person name="Villablanca E.J."/>
            <person name="Kuo S.Y."/>
            <person name="Huang H."/>
            <person name="Macia L."/>
            <person name="Bhan A.K."/>
            <person name="Batten M."/>
            <person name="Daly M.J."/>
            <person name="Reggiori F."/>
            <person name="Mackay C.R."/>
            <person name="Xavier R.J."/>
        </authorList>
    </citation>
    <scope>FUNCTION</scope>
    <scope>CHARACTERIZATION OF VARIANT LEU-231</scope>
</reference>
<reference key="10">
    <citation type="journal article" date="2021" name="J. Biol. Chem.">
        <title>The evolution and mechanism of GPCR proton sensing.</title>
        <authorList>
            <person name="Rowe J.B."/>
            <person name="Kapolka N.J."/>
            <person name="Taghon G.J."/>
            <person name="Morgan W.M."/>
            <person name="Isom D.G."/>
        </authorList>
    </citation>
    <scope>FUNCTION</scope>
    <scope>DOMAIN</scope>
    <scope>MUTAGENESIS OF GLU-42; ASP-60 AND ASP-286</scope>
</reference>
<reference key="11">
    <citation type="journal article" date="2023" name="Proc. Natl. Acad. Sci. U.S.A.">
        <title>Location-biased activation of the proton-sensor GPR65 is uncoupled from receptor trafficking.</title>
        <authorList>
            <person name="Morales Rodriguez L.M."/>
            <person name="Crilly S.E."/>
            <person name="Rowe J.B."/>
            <person name="Isom D.G."/>
            <person name="Puthenveedu M.A."/>
        </authorList>
    </citation>
    <scope>FUNCTION</scope>
    <scope>SUBCELLULAR LOCATION</scope>
    <scope>MUTAGENESIS OF HIS-10; HIS-14 AND HIS-243</scope>
</reference>
<reference evidence="20" key="12">
    <citation type="journal article" date="2025" name="Cell">
        <title>Molecular basis of proton sensing by G protein-coupled receptors.</title>
        <authorList>
            <person name="Howard M.K."/>
            <person name="Hoppe N."/>
            <person name="Huang X.P."/>
            <person name="Mitrovic D."/>
            <person name="Billesboelle C.B."/>
            <person name="Macdonald C.B."/>
            <person name="Mehrotra E."/>
            <person name="Rockefeller Grimes P."/>
            <person name="Trinidad D.D."/>
            <person name="Delemotte L."/>
            <person name="English J.G."/>
            <person name="Coyote-Maestas W."/>
            <person name="Manglik A."/>
        </authorList>
    </citation>
    <scope>STRUCTURE BY ELECTRON MICROSCOPY (2.8 ANGSTROMS) IN COMPLEX WITH GNAS</scope>
    <scope>DISULFIDE BONDS</scope>
    <scope>FUNCTION</scope>
    <scope>ACTIVITY REGULATION</scope>
    <scope>DOMAIN</scope>
    <scope>MUTAGENESIS OF GLU-142; ASP-172 AND ARG-273</scope>
</reference>
<proteinExistence type="evidence at protein level"/>
<protein>
    <recommendedName>
        <fullName evidence="15">G-protein coupled receptor 65</fullName>
    </recommendedName>
    <alternativeName>
        <fullName evidence="14">Psychosine receptor</fullName>
    </alternativeName>
    <alternativeName>
        <fullName evidence="16">T-cell death-associated gene 8 protein</fullName>
    </alternativeName>
</protein>
<accession>Q8IYL9</accession>
<accession>O75819</accession>
<name>GPR65_HUMAN</name>
<keyword id="KW-0002">3D-structure</keyword>
<keyword id="KW-0053">Apoptosis</keyword>
<keyword id="KW-1003">Cell membrane</keyword>
<keyword id="KW-1015">Disulfide bond</keyword>
<keyword id="KW-0967">Endosome</keyword>
<keyword id="KW-0297">G-protein coupled receptor</keyword>
<keyword id="KW-0325">Glycoprotein</keyword>
<keyword id="KW-0472">Membrane</keyword>
<keyword id="KW-1267">Proteomics identification</keyword>
<keyword id="KW-0675">Receptor</keyword>
<keyword id="KW-1185">Reference proteome</keyword>
<keyword id="KW-0807">Transducer</keyword>
<keyword id="KW-0812">Transmembrane</keyword>
<keyword id="KW-1133">Transmembrane helix</keyword>
<organism>
    <name type="scientific">Homo sapiens</name>
    <name type="common">Human</name>
    <dbReference type="NCBI Taxonomy" id="9606"/>
    <lineage>
        <taxon>Eukaryota</taxon>
        <taxon>Metazoa</taxon>
        <taxon>Chordata</taxon>
        <taxon>Craniata</taxon>
        <taxon>Vertebrata</taxon>
        <taxon>Euteleostomi</taxon>
        <taxon>Mammalia</taxon>
        <taxon>Eutheria</taxon>
        <taxon>Euarchontoglires</taxon>
        <taxon>Primates</taxon>
        <taxon>Haplorrhini</taxon>
        <taxon>Catarrhini</taxon>
        <taxon>Hominidae</taxon>
        <taxon>Homo</taxon>
    </lineage>
</organism>
<sequence>MNSTCIEEQHDLDHYLFPIVYIFVIIVSIPANIGSLCVSFLQAKKESELGIYLFSLSLSDLLYALTLPLWIDYTWNKDNWTFSPALCKGSAFLMYMNFYSSTAFLTCIAVDRYLAVVYPLKFFFLRTRRFALMVSLSIWILETIFNAVMLWEDETVVEYCDAEKSNFTLCYDKYPLEKWQINLNLFRTCTGYAIPLVTILICNRKVYQAVRHNKATENKEKKRIIKLLVSITVTFVLCFTPFHVMLLIRCILEHAVNFEDHSNSGKRTYTMYRITVALTSLNCVADPILYCFVTETGRYDMWNILKFCTGRCNTSQRQRKRILSVSTKDTMELEVLE</sequence>